<keyword id="KW-0349">Heme</keyword>
<keyword id="KW-0408">Iron</keyword>
<keyword id="KW-0479">Metal-binding</keyword>
<keyword id="KW-0503">Monooxygenase</keyword>
<keyword id="KW-0560">Oxidoreductase</keyword>
<keyword id="KW-1185">Reference proteome</keyword>
<reference key="1">
    <citation type="journal article" date="1997" name="J. Bacteriol.">
        <title>An lrp-like gene of Bacillus subtilis involved in branched-chain amino acid transport.</title>
        <authorList>
            <person name="Belitsky B.R."/>
            <person name="Gustafsson M.C.U."/>
            <person name="Sonenshein A.L."/>
            <person name="von Wachenfeldt C."/>
        </authorList>
    </citation>
    <scope>NUCLEOTIDE SEQUENCE [GENOMIC DNA]</scope>
    <source>
        <strain>168 / BGSC1A1</strain>
    </source>
</reference>
<reference key="2">
    <citation type="journal article" date="1997" name="Microbiology">
        <title>Sequence of the Bacillus subtilis genome region in the vicinity of the lev operon reveals two new extracytoplasmic function RNA polymerase sigma factors SigV and SigZ.</title>
        <authorList>
            <person name="Sorokin A."/>
            <person name="Bolotin A."/>
            <person name="Purnelle B."/>
            <person name="Hilbert H."/>
            <person name="Lauber J."/>
            <person name="Duesterhoeft A."/>
            <person name="Ehrlich S.D."/>
        </authorList>
    </citation>
    <scope>NUCLEOTIDE SEQUENCE [GENOMIC DNA]</scope>
    <source>
        <strain>168</strain>
    </source>
</reference>
<reference key="3">
    <citation type="journal article" date="1997" name="Nature">
        <title>The complete genome sequence of the Gram-positive bacterium Bacillus subtilis.</title>
        <authorList>
            <person name="Kunst F."/>
            <person name="Ogasawara N."/>
            <person name="Moszer I."/>
            <person name="Albertini A.M."/>
            <person name="Alloni G."/>
            <person name="Azevedo V."/>
            <person name="Bertero M.G."/>
            <person name="Bessieres P."/>
            <person name="Bolotin A."/>
            <person name="Borchert S."/>
            <person name="Borriss R."/>
            <person name="Boursier L."/>
            <person name="Brans A."/>
            <person name="Braun M."/>
            <person name="Brignell S.C."/>
            <person name="Bron S."/>
            <person name="Brouillet S."/>
            <person name="Bruschi C.V."/>
            <person name="Caldwell B."/>
            <person name="Capuano V."/>
            <person name="Carter N.M."/>
            <person name="Choi S.-K."/>
            <person name="Codani J.-J."/>
            <person name="Connerton I.F."/>
            <person name="Cummings N.J."/>
            <person name="Daniel R.A."/>
            <person name="Denizot F."/>
            <person name="Devine K.M."/>
            <person name="Duesterhoeft A."/>
            <person name="Ehrlich S.D."/>
            <person name="Emmerson P.T."/>
            <person name="Entian K.-D."/>
            <person name="Errington J."/>
            <person name="Fabret C."/>
            <person name="Ferrari E."/>
            <person name="Foulger D."/>
            <person name="Fritz C."/>
            <person name="Fujita M."/>
            <person name="Fujita Y."/>
            <person name="Fuma S."/>
            <person name="Galizzi A."/>
            <person name="Galleron N."/>
            <person name="Ghim S.-Y."/>
            <person name="Glaser P."/>
            <person name="Goffeau A."/>
            <person name="Golightly E.J."/>
            <person name="Grandi G."/>
            <person name="Guiseppi G."/>
            <person name="Guy B.J."/>
            <person name="Haga K."/>
            <person name="Haiech J."/>
            <person name="Harwood C.R."/>
            <person name="Henaut A."/>
            <person name="Hilbert H."/>
            <person name="Holsappel S."/>
            <person name="Hosono S."/>
            <person name="Hullo M.-F."/>
            <person name="Itaya M."/>
            <person name="Jones L.-M."/>
            <person name="Joris B."/>
            <person name="Karamata D."/>
            <person name="Kasahara Y."/>
            <person name="Klaerr-Blanchard M."/>
            <person name="Klein C."/>
            <person name="Kobayashi Y."/>
            <person name="Koetter P."/>
            <person name="Koningstein G."/>
            <person name="Krogh S."/>
            <person name="Kumano M."/>
            <person name="Kurita K."/>
            <person name="Lapidus A."/>
            <person name="Lardinois S."/>
            <person name="Lauber J."/>
            <person name="Lazarevic V."/>
            <person name="Lee S.-M."/>
            <person name="Levine A."/>
            <person name="Liu H."/>
            <person name="Masuda S."/>
            <person name="Mauel C."/>
            <person name="Medigue C."/>
            <person name="Medina N."/>
            <person name="Mellado R.P."/>
            <person name="Mizuno M."/>
            <person name="Moestl D."/>
            <person name="Nakai S."/>
            <person name="Noback M."/>
            <person name="Noone D."/>
            <person name="O'Reilly M."/>
            <person name="Ogawa K."/>
            <person name="Ogiwara A."/>
            <person name="Oudega B."/>
            <person name="Park S.-H."/>
            <person name="Parro V."/>
            <person name="Pohl T.M."/>
            <person name="Portetelle D."/>
            <person name="Porwollik S."/>
            <person name="Prescott A.M."/>
            <person name="Presecan E."/>
            <person name="Pujic P."/>
            <person name="Purnelle B."/>
            <person name="Rapoport G."/>
            <person name="Rey M."/>
            <person name="Reynolds S."/>
            <person name="Rieger M."/>
            <person name="Rivolta C."/>
            <person name="Rocha E."/>
            <person name="Roche B."/>
            <person name="Rose M."/>
            <person name="Sadaie Y."/>
            <person name="Sato T."/>
            <person name="Scanlan E."/>
            <person name="Schleich S."/>
            <person name="Schroeter R."/>
            <person name="Scoffone F."/>
            <person name="Sekiguchi J."/>
            <person name="Sekowska A."/>
            <person name="Seror S.J."/>
            <person name="Serror P."/>
            <person name="Shin B.-S."/>
            <person name="Soldo B."/>
            <person name="Sorokin A."/>
            <person name="Tacconi E."/>
            <person name="Takagi T."/>
            <person name="Takahashi H."/>
            <person name="Takemaru K."/>
            <person name="Takeuchi M."/>
            <person name="Tamakoshi A."/>
            <person name="Tanaka T."/>
            <person name="Terpstra P."/>
            <person name="Tognoni A."/>
            <person name="Tosato V."/>
            <person name="Uchiyama S."/>
            <person name="Vandenbol M."/>
            <person name="Vannier F."/>
            <person name="Vassarotti A."/>
            <person name="Viari A."/>
            <person name="Wambutt R."/>
            <person name="Wedler E."/>
            <person name="Wedler H."/>
            <person name="Weitzenegger T."/>
            <person name="Winters P."/>
            <person name="Wipat A."/>
            <person name="Yamamoto H."/>
            <person name="Yamane K."/>
            <person name="Yasumoto K."/>
            <person name="Yata K."/>
            <person name="Yoshida K."/>
            <person name="Yoshikawa H.-F."/>
            <person name="Zumstein E."/>
            <person name="Yoshikawa H."/>
            <person name="Danchin A."/>
        </authorList>
    </citation>
    <scope>NUCLEOTIDE SEQUENCE [LARGE SCALE GENOMIC DNA]</scope>
    <source>
        <strain>168</strain>
    </source>
</reference>
<protein>
    <recommendedName>
        <fullName>Cytochrome P450</fullName>
        <ecNumber>1.14.-.-</ecNumber>
    </recommendedName>
</protein>
<feature type="chain" id="PRO_0000052233" description="Cytochrome P450">
    <location>
        <begin position="1"/>
        <end position="410"/>
    </location>
</feature>
<feature type="binding site" description="axial binding residue" evidence="1">
    <location>
        <position position="359"/>
    </location>
    <ligand>
        <name>heme</name>
        <dbReference type="ChEBI" id="CHEBI:30413"/>
    </ligand>
    <ligandPart>
        <name>Fe</name>
        <dbReference type="ChEBI" id="CHEBI:18248"/>
    </ligandPart>
</feature>
<evidence type="ECO:0000250" key="1"/>
<evidence type="ECO:0000305" key="2"/>
<accession>O08469</accession>
<proteinExistence type="inferred from homology"/>
<gene>
    <name type="primary">cypA</name>
    <name type="synonym">CYP107J1</name>
    <name type="synonym">yrdE</name>
    <name type="ordered locus">BSU26740</name>
</gene>
<organism>
    <name type="scientific">Bacillus subtilis (strain 168)</name>
    <dbReference type="NCBI Taxonomy" id="224308"/>
    <lineage>
        <taxon>Bacteria</taxon>
        <taxon>Bacillati</taxon>
        <taxon>Bacillota</taxon>
        <taxon>Bacilli</taxon>
        <taxon>Bacillales</taxon>
        <taxon>Bacillaceae</taxon>
        <taxon>Bacillus</taxon>
    </lineage>
</organism>
<sequence>MSSKEKKSVTILTESQLSSRAFKDEAYEFYKELRKSQALYPLSLGALGKGWLISRYDDAIHLLKNEKLKKNYENVFTAKEKRPALLKNEETLTKHMLNSDPPDHNRLRTLVQKAFTHRMILQLEDKIQHIADSLLDKVQPNKFMNLVDDYAFPLPIIVISEMLGIPLEDRQKFRVWSQAIIDFSDAPERLQENDHLLGEFVEYLESLVRKKRREPAGDLISALIQAESEGTQLSTEELYSMIMLLIVAGHETTVNLITNMTYALMCHHDQLEKLRQQPDLMNSAIEEALRFHSPVELTTIRWTAEPFILHGQEIKRKDVIIISLASANRDEKIFPNADIFDIERKNNRHIAFGHGNHFCLGAQLARLEAKIAISTLLRRCPNIQLKGEKKQMKWKGNFLMRALEELPISF</sequence>
<dbReference type="EC" id="1.14.-.-"/>
<dbReference type="EMBL" id="Y11043">
    <property type="protein sequence ID" value="CAA71937.1"/>
    <property type="molecule type" value="Genomic_DNA"/>
</dbReference>
<dbReference type="EMBL" id="U93876">
    <property type="protein sequence ID" value="AAB80898.1"/>
    <property type="molecule type" value="Genomic_DNA"/>
</dbReference>
<dbReference type="EMBL" id="AL009126">
    <property type="protein sequence ID" value="CAB14615.1"/>
    <property type="molecule type" value="Genomic_DNA"/>
</dbReference>
<dbReference type="PIR" id="E69611">
    <property type="entry name" value="E69611"/>
</dbReference>
<dbReference type="RefSeq" id="NP_390551.1">
    <property type="nucleotide sequence ID" value="NC_000964.3"/>
</dbReference>
<dbReference type="RefSeq" id="WP_003229866.1">
    <property type="nucleotide sequence ID" value="NZ_OZ025638.1"/>
</dbReference>
<dbReference type="SMR" id="O08469"/>
<dbReference type="FunCoup" id="O08469">
    <property type="interactions" value="152"/>
</dbReference>
<dbReference type="STRING" id="224308.BSU26740"/>
<dbReference type="PaxDb" id="224308-BSU26740"/>
<dbReference type="EnsemblBacteria" id="CAB14615">
    <property type="protein sequence ID" value="CAB14615"/>
    <property type="gene ID" value="BSU_26740"/>
</dbReference>
<dbReference type="GeneID" id="937623"/>
<dbReference type="KEGG" id="bsu:BSU26740"/>
<dbReference type="PATRIC" id="fig|224308.179.peg.2904"/>
<dbReference type="eggNOG" id="COG2124">
    <property type="taxonomic scope" value="Bacteria"/>
</dbReference>
<dbReference type="InParanoid" id="O08469"/>
<dbReference type="OrthoDB" id="9801155at2"/>
<dbReference type="PhylomeDB" id="O08469"/>
<dbReference type="BioCyc" id="BSUB:BSU26740-MONOMER"/>
<dbReference type="Proteomes" id="UP000001570">
    <property type="component" value="Chromosome"/>
</dbReference>
<dbReference type="GO" id="GO:0020037">
    <property type="term" value="F:heme binding"/>
    <property type="evidence" value="ECO:0000318"/>
    <property type="project" value="GO_Central"/>
</dbReference>
<dbReference type="GO" id="GO:0005506">
    <property type="term" value="F:iron ion binding"/>
    <property type="evidence" value="ECO:0007669"/>
    <property type="project" value="InterPro"/>
</dbReference>
<dbReference type="GO" id="GO:0004497">
    <property type="term" value="F:monooxygenase activity"/>
    <property type="evidence" value="ECO:0000318"/>
    <property type="project" value="GO_Central"/>
</dbReference>
<dbReference type="GO" id="GO:0016705">
    <property type="term" value="F:oxidoreductase activity, acting on paired donors, with incorporation or reduction of molecular oxygen"/>
    <property type="evidence" value="ECO:0007669"/>
    <property type="project" value="InterPro"/>
</dbReference>
<dbReference type="CDD" id="cd11029">
    <property type="entry name" value="CYP107-like"/>
    <property type="match status" value="1"/>
</dbReference>
<dbReference type="FunFam" id="1.10.630.10:FF:000018">
    <property type="entry name" value="Cytochrome P450 monooxygenase"/>
    <property type="match status" value="1"/>
</dbReference>
<dbReference type="Gene3D" id="1.10.630.10">
    <property type="entry name" value="Cytochrome P450"/>
    <property type="match status" value="1"/>
</dbReference>
<dbReference type="InterPro" id="IPR001128">
    <property type="entry name" value="Cyt_P450"/>
</dbReference>
<dbReference type="InterPro" id="IPR002397">
    <property type="entry name" value="Cyt_P450_B"/>
</dbReference>
<dbReference type="InterPro" id="IPR017972">
    <property type="entry name" value="Cyt_P450_CS"/>
</dbReference>
<dbReference type="InterPro" id="IPR036396">
    <property type="entry name" value="Cyt_P450_sf"/>
</dbReference>
<dbReference type="PANTHER" id="PTHR46696:SF1">
    <property type="entry name" value="CYTOCHROME P450 YJIB-RELATED"/>
    <property type="match status" value="1"/>
</dbReference>
<dbReference type="PANTHER" id="PTHR46696">
    <property type="entry name" value="P450, PUTATIVE (EUROFUNG)-RELATED"/>
    <property type="match status" value="1"/>
</dbReference>
<dbReference type="Pfam" id="PF00067">
    <property type="entry name" value="p450"/>
    <property type="match status" value="1"/>
</dbReference>
<dbReference type="PRINTS" id="PR00359">
    <property type="entry name" value="BP450"/>
</dbReference>
<dbReference type="PRINTS" id="PR00385">
    <property type="entry name" value="P450"/>
</dbReference>
<dbReference type="SUPFAM" id="SSF48264">
    <property type="entry name" value="Cytochrome P450"/>
    <property type="match status" value="1"/>
</dbReference>
<dbReference type="PROSITE" id="PS00086">
    <property type="entry name" value="CYTOCHROME_P450"/>
    <property type="match status" value="1"/>
</dbReference>
<name>CPXY_BACSU</name>
<comment type="cofactor">
    <cofactor evidence="1">
        <name>heme</name>
        <dbReference type="ChEBI" id="CHEBI:30413"/>
    </cofactor>
</comment>
<comment type="similarity">
    <text evidence="2">Belongs to the cytochrome P450 family.</text>
</comment>